<proteinExistence type="evidence at protein level"/>
<reference key="1">
    <citation type="journal article" date="1998" name="Genomics">
        <title>Identification of high-molecular-weight proteins with multiple EGF-like motifs by motif-trap screening.</title>
        <authorList>
            <person name="Nakayama M."/>
            <person name="Nakajima D."/>
            <person name="Nagase T."/>
            <person name="Nomura N."/>
            <person name="Seki N."/>
            <person name="Ohara O."/>
        </authorList>
    </citation>
    <scope>NUCLEOTIDE SEQUENCE [MRNA]</scope>
    <scope>TISSUE SPECIFICITY</scope>
    <source>
        <strain>Sprague-Dawley</strain>
        <tissue>Brain</tissue>
    </source>
</reference>
<reference key="2">
    <citation type="submission" date="2009-01" db="UniProtKB">
        <authorList>
            <person name="Lubec G."/>
            <person name="Chen W.-Q."/>
        </authorList>
    </citation>
    <scope>PROTEIN SEQUENCE OF 482-486</scope>
    <scope>IDENTIFICATION BY MASS SPECTROMETRY</scope>
    <source>
        <strain>Sprague-Dawley</strain>
        <tissue>Hippocampus</tissue>
    </source>
</reference>
<keyword id="KW-0903">Direct protein sequencing</keyword>
<keyword id="KW-1015">Disulfide bond</keyword>
<keyword id="KW-0245">EGF-like domain</keyword>
<keyword id="KW-1185">Reference proteome</keyword>
<keyword id="KW-0677">Repeat</keyword>
<keyword id="KW-0964">Secreted</keyword>
<keyword id="KW-0732">Signal</keyword>
<protein>
    <recommendedName>
        <fullName>Multiple epidermal growth factor-like domains protein 6</fullName>
        <shortName>Multiple EGF-like domains protein 6</shortName>
    </recommendedName>
    <alternativeName>
        <fullName>Epidermal growth factor-like protein 3</fullName>
        <shortName>EGF-like protein 3</shortName>
    </alternativeName>
</protein>
<name>MEGF6_RAT</name>
<dbReference type="EMBL" id="AB011532">
    <property type="protein sequence ID" value="BAA32462.1"/>
    <property type="molecule type" value="mRNA"/>
</dbReference>
<dbReference type="PIR" id="T13954">
    <property type="entry name" value="T13954"/>
</dbReference>
<dbReference type="RefSeq" id="NP_075244.1">
    <property type="nucleotide sequence ID" value="NM_022955.1"/>
</dbReference>
<dbReference type="SMR" id="O88281"/>
<dbReference type="STRING" id="10116.ENSRNOP00000052252"/>
<dbReference type="PhosphoSitePlus" id="O88281"/>
<dbReference type="PaxDb" id="10116-ENSRNOP00000000169"/>
<dbReference type="GeneID" id="65049"/>
<dbReference type="KEGG" id="rno:65049"/>
<dbReference type="UCSC" id="RGD:621188">
    <property type="organism name" value="rat"/>
</dbReference>
<dbReference type="AGR" id="RGD:621188"/>
<dbReference type="CTD" id="1953"/>
<dbReference type="RGD" id="621188">
    <property type="gene designation" value="Megf6"/>
</dbReference>
<dbReference type="eggNOG" id="KOG1218">
    <property type="taxonomic scope" value="Eukaryota"/>
</dbReference>
<dbReference type="InParanoid" id="O88281"/>
<dbReference type="OrthoDB" id="651at9989"/>
<dbReference type="PhylomeDB" id="O88281"/>
<dbReference type="Reactome" id="R-RNO-3000157">
    <property type="pathway name" value="Laminin interactions"/>
</dbReference>
<dbReference type="Reactome" id="R-RNO-381426">
    <property type="pathway name" value="Regulation of Insulin-like Growth Factor (IGF) transport and uptake by Insulin-like Growth Factor Binding Proteins (IGFBPs)"/>
</dbReference>
<dbReference type="Reactome" id="R-RNO-446107">
    <property type="pathway name" value="Type I hemidesmosome assembly"/>
</dbReference>
<dbReference type="Reactome" id="R-RNO-8874081">
    <property type="pathway name" value="MET activates PTK2 signaling"/>
</dbReference>
<dbReference type="Reactome" id="R-RNO-8957275">
    <property type="pathway name" value="Post-translational protein phosphorylation"/>
</dbReference>
<dbReference type="Reactome" id="R-RNO-9913351">
    <property type="pathway name" value="Formation of the dystrophin-glycoprotein complex (DGC)"/>
</dbReference>
<dbReference type="PRO" id="PR:O88281"/>
<dbReference type="Proteomes" id="UP000002494">
    <property type="component" value="Unplaced"/>
</dbReference>
<dbReference type="GO" id="GO:0005576">
    <property type="term" value="C:extracellular region"/>
    <property type="evidence" value="ECO:0007669"/>
    <property type="project" value="UniProtKB-SubCell"/>
</dbReference>
<dbReference type="GO" id="GO:0005509">
    <property type="term" value="F:calcium ion binding"/>
    <property type="evidence" value="ECO:0007669"/>
    <property type="project" value="InterPro"/>
</dbReference>
<dbReference type="GO" id="GO:0005044">
    <property type="term" value="F:scavenger receptor activity"/>
    <property type="evidence" value="ECO:0007669"/>
    <property type="project" value="InterPro"/>
</dbReference>
<dbReference type="FunFam" id="2.10.25.10:FF:000326">
    <property type="entry name" value="Multiple EGF like domains 6"/>
    <property type="match status" value="1"/>
</dbReference>
<dbReference type="FunFam" id="2.170.300.10:FF:000002">
    <property type="entry name" value="Multiple epidermal growth factor-like domains 10"/>
    <property type="match status" value="2"/>
</dbReference>
<dbReference type="FunFam" id="2.10.25.10:FF:000306">
    <property type="entry name" value="Multiple epidermal growth factor-like domains 6"/>
    <property type="match status" value="1"/>
</dbReference>
<dbReference type="FunFam" id="2.10.25.10:FF:000772">
    <property type="entry name" value="Multiple epidermal growth factor-like domains 6"/>
    <property type="match status" value="1"/>
</dbReference>
<dbReference type="FunFam" id="2.170.300.10:FF:000027">
    <property type="entry name" value="Multiple epidermal growth factor-like domains 6"/>
    <property type="match status" value="1"/>
</dbReference>
<dbReference type="FunFam" id="2.10.25.10:FF:000863">
    <property type="entry name" value="Multiple epidermal growth factor-like domains protein 6"/>
    <property type="match status" value="1"/>
</dbReference>
<dbReference type="FunFam" id="2.10.25.10:FF:000926">
    <property type="entry name" value="Multiple epidermal growth factor-like domains protein 6"/>
    <property type="match status" value="1"/>
</dbReference>
<dbReference type="FunFam" id="2.170.300.10:FF:000030">
    <property type="entry name" value="Multiple epidermal growth factor-like domains protein 6"/>
    <property type="match status" value="1"/>
</dbReference>
<dbReference type="FunFam" id="2.10.25.10:FF:000028">
    <property type="entry name" value="Signal peptide, CUB domain and EGF-like domain-containing 2"/>
    <property type="match status" value="1"/>
</dbReference>
<dbReference type="FunFam" id="2.10.25.10:FF:000037">
    <property type="entry name" value="Signal peptide, CUB domain and EGF-like domain-containing 2"/>
    <property type="match status" value="2"/>
</dbReference>
<dbReference type="FunFam" id="2.170.300.10:FF:000041">
    <property type="entry name" value="Tyrosine protein kinase receptor tie-1, putative"/>
    <property type="match status" value="4"/>
</dbReference>
<dbReference type="Gene3D" id="2.10.25.10">
    <property type="entry name" value="Laminin"/>
    <property type="match status" value="9"/>
</dbReference>
<dbReference type="Gene3D" id="2.170.300.10">
    <property type="entry name" value="Tie2 ligand-binding domain superfamily"/>
    <property type="match status" value="7"/>
</dbReference>
<dbReference type="InterPro" id="IPR026823">
    <property type="entry name" value="cEGF"/>
</dbReference>
<dbReference type="InterPro" id="IPR001881">
    <property type="entry name" value="EGF-like_Ca-bd_dom"/>
</dbReference>
<dbReference type="InterPro" id="IPR000742">
    <property type="entry name" value="EGF-like_dom"/>
</dbReference>
<dbReference type="InterPro" id="IPR000152">
    <property type="entry name" value="EGF-type_Asp/Asn_hydroxyl_site"/>
</dbReference>
<dbReference type="InterPro" id="IPR018097">
    <property type="entry name" value="EGF_Ca-bd_CS"/>
</dbReference>
<dbReference type="InterPro" id="IPR013111">
    <property type="entry name" value="EGF_extracell"/>
</dbReference>
<dbReference type="InterPro" id="IPR011489">
    <property type="entry name" value="EMI_domain"/>
</dbReference>
<dbReference type="InterPro" id="IPR009030">
    <property type="entry name" value="Growth_fac_rcpt_cys_sf"/>
</dbReference>
<dbReference type="InterPro" id="IPR002049">
    <property type="entry name" value="LE_dom"/>
</dbReference>
<dbReference type="InterPro" id="IPR042635">
    <property type="entry name" value="MEGF10/SREC1/2-like"/>
</dbReference>
<dbReference type="InterPro" id="IPR049883">
    <property type="entry name" value="NOTCH1_EGF-like"/>
</dbReference>
<dbReference type="PANTHER" id="PTHR24043:SF10">
    <property type="entry name" value="MULTIPLE EGF LIKE DOMAINS 6"/>
    <property type="match status" value="1"/>
</dbReference>
<dbReference type="PANTHER" id="PTHR24043">
    <property type="entry name" value="SCAVENGER RECEPTOR CLASS F"/>
    <property type="match status" value="1"/>
</dbReference>
<dbReference type="Pfam" id="PF12662">
    <property type="entry name" value="cEGF"/>
    <property type="match status" value="1"/>
</dbReference>
<dbReference type="Pfam" id="PF07974">
    <property type="entry name" value="EGF_2"/>
    <property type="match status" value="1"/>
</dbReference>
<dbReference type="Pfam" id="PF07645">
    <property type="entry name" value="EGF_CA"/>
    <property type="match status" value="3"/>
</dbReference>
<dbReference type="Pfam" id="PF00053">
    <property type="entry name" value="EGF_laminin"/>
    <property type="match status" value="8"/>
</dbReference>
<dbReference type="Pfam" id="PF14670">
    <property type="entry name" value="FXa_inhibition"/>
    <property type="match status" value="3"/>
</dbReference>
<dbReference type="PRINTS" id="PR00011">
    <property type="entry name" value="EGFLAMININ"/>
</dbReference>
<dbReference type="SMART" id="SM00181">
    <property type="entry name" value="EGF"/>
    <property type="match status" value="32"/>
</dbReference>
<dbReference type="SMART" id="SM00179">
    <property type="entry name" value="EGF_CA"/>
    <property type="match status" value="8"/>
</dbReference>
<dbReference type="SMART" id="SM00180">
    <property type="entry name" value="EGF_Lam"/>
    <property type="match status" value="23"/>
</dbReference>
<dbReference type="SUPFAM" id="SSF57196">
    <property type="entry name" value="EGF/Laminin"/>
    <property type="match status" value="2"/>
</dbReference>
<dbReference type="SUPFAM" id="SSF57184">
    <property type="entry name" value="Growth factor receptor domain"/>
    <property type="match status" value="2"/>
</dbReference>
<dbReference type="PROSITE" id="PS00010">
    <property type="entry name" value="ASX_HYDROXYL"/>
    <property type="match status" value="5"/>
</dbReference>
<dbReference type="PROSITE" id="PS00022">
    <property type="entry name" value="EGF_1"/>
    <property type="match status" value="23"/>
</dbReference>
<dbReference type="PROSITE" id="PS01186">
    <property type="entry name" value="EGF_2"/>
    <property type="match status" value="23"/>
</dbReference>
<dbReference type="PROSITE" id="PS50026">
    <property type="entry name" value="EGF_3"/>
    <property type="match status" value="21"/>
</dbReference>
<dbReference type="PROSITE" id="PS01187">
    <property type="entry name" value="EGF_CA"/>
    <property type="match status" value="5"/>
</dbReference>
<dbReference type="PROSITE" id="PS51041">
    <property type="entry name" value="EMI"/>
    <property type="match status" value="1"/>
</dbReference>
<feature type="signal peptide" evidence="2">
    <location>
        <begin position="1"/>
        <end position="27"/>
    </location>
</feature>
<feature type="chain" id="PRO_0000007525" description="Multiple epidermal growth factor-like domains protein 6">
    <location>
        <begin position="28"/>
        <end position="1574"/>
    </location>
</feature>
<feature type="domain" description="EMI" evidence="4">
    <location>
        <begin position="40"/>
        <end position="122"/>
    </location>
</feature>
<feature type="domain" description="EGF-like 1; calcium-binding" evidence="3">
    <location>
        <begin position="123"/>
        <end position="163"/>
    </location>
</feature>
<feature type="domain" description="EGF-like 2; calcium-binding" evidence="3">
    <location>
        <begin position="164"/>
        <end position="204"/>
    </location>
</feature>
<feature type="domain" description="EGF-like 3" evidence="3">
    <location>
        <begin position="205"/>
        <end position="246"/>
    </location>
</feature>
<feature type="domain" description="EGF-like 4" evidence="3">
    <location>
        <begin position="247"/>
        <end position="287"/>
    </location>
</feature>
<feature type="domain" description="EGF-like 5; calcium-binding" evidence="3">
    <location>
        <begin position="288"/>
        <end position="328"/>
    </location>
</feature>
<feature type="domain" description="EGF-like 6" evidence="3">
    <location>
        <begin position="334"/>
        <end position="374"/>
    </location>
</feature>
<feature type="domain" description="EGF-like 7" evidence="3">
    <location>
        <begin position="375"/>
        <end position="412"/>
    </location>
</feature>
<feature type="domain" description="EGF-like 8; calcium-binding" evidence="3">
    <location>
        <begin position="415"/>
        <end position="455"/>
    </location>
</feature>
<feature type="domain" description="EGF-like 9" evidence="3">
    <location>
        <begin position="520"/>
        <end position="556"/>
    </location>
</feature>
<feature type="domain" description="EGF-like 10" evidence="3">
    <location>
        <begin position="564"/>
        <end position="599"/>
    </location>
</feature>
<feature type="domain" description="EGF-like 11" evidence="3">
    <location>
        <begin position="607"/>
        <end position="642"/>
    </location>
</feature>
<feature type="domain" description="EGF-like 12" evidence="3">
    <location>
        <begin position="650"/>
        <end position="687"/>
    </location>
</feature>
<feature type="domain" description="EGF-like 13" evidence="3">
    <location>
        <begin position="695"/>
        <end position="732"/>
    </location>
</feature>
<feature type="domain" description="EGF-like 14" evidence="3">
    <location>
        <begin position="740"/>
        <end position="774"/>
    </location>
</feature>
<feature type="domain" description="EGF-like 15" evidence="3">
    <location>
        <begin position="782"/>
        <end position="818"/>
    </location>
</feature>
<feature type="domain" description="EGF-like 16" evidence="3">
    <location>
        <begin position="826"/>
        <end position="861"/>
    </location>
</feature>
<feature type="domain" description="EGF-like 17" evidence="3">
    <location>
        <begin position="869"/>
        <end position="905"/>
    </location>
</feature>
<feature type="domain" description="EGF-like 18" evidence="3">
    <location>
        <begin position="913"/>
        <end position="948"/>
    </location>
</feature>
<feature type="domain" description="EGF-like 19" evidence="3">
    <location>
        <begin position="956"/>
        <end position="991"/>
    </location>
</feature>
<feature type="domain" description="EGF-like 20" evidence="3">
    <location>
        <begin position="999"/>
        <end position="1034"/>
    </location>
</feature>
<feature type="domain" description="EGF-like 21" evidence="3">
    <location>
        <begin position="1042"/>
        <end position="1077"/>
    </location>
</feature>
<feature type="domain" description="EGF-like 22" evidence="3">
    <location>
        <begin position="1085"/>
        <end position="1120"/>
    </location>
</feature>
<feature type="domain" description="EGF-like 23" evidence="3">
    <location>
        <begin position="1128"/>
        <end position="1163"/>
    </location>
</feature>
<feature type="domain" description="EGF-like 24" evidence="3">
    <location>
        <begin position="1171"/>
        <end position="1206"/>
    </location>
</feature>
<feature type="domain" description="EGF-like 25" evidence="3">
    <location>
        <begin position="1214"/>
        <end position="1250"/>
    </location>
</feature>
<feature type="domain" description="EGF-like 26" evidence="3">
    <location>
        <begin position="1258"/>
        <end position="1293"/>
    </location>
</feature>
<feature type="domain" description="EGF-like 27" evidence="3">
    <location>
        <begin position="1301"/>
        <end position="1336"/>
    </location>
</feature>
<feature type="domain" description="EGF-like 28" evidence="3">
    <location>
        <begin position="1344"/>
        <end position="1379"/>
    </location>
</feature>
<feature type="domain" description="EGF-like 29" evidence="3">
    <location>
        <begin position="1387"/>
        <end position="1422"/>
    </location>
</feature>
<feature type="domain" description="EGF-like 30" evidence="3">
    <location>
        <begin position="1430"/>
        <end position="1465"/>
    </location>
</feature>
<feature type="domain" description="EGF-like 31" evidence="3">
    <location>
        <begin position="1473"/>
        <end position="1508"/>
    </location>
</feature>
<feature type="domain" description="EGF-like 32" evidence="3">
    <location>
        <begin position="1516"/>
        <end position="1551"/>
    </location>
</feature>
<feature type="region of interest" description="Disordered" evidence="5">
    <location>
        <begin position="1555"/>
        <end position="1574"/>
    </location>
</feature>
<feature type="compositionally biased region" description="Polar residues" evidence="5">
    <location>
        <begin position="1555"/>
        <end position="1568"/>
    </location>
</feature>
<feature type="disulfide bond" evidence="1">
    <location>
        <begin position="44"/>
        <end position="108"/>
    </location>
</feature>
<feature type="disulfide bond" evidence="1">
    <location>
        <begin position="74"/>
        <end position="80"/>
    </location>
</feature>
<feature type="disulfide bond" evidence="1">
    <location>
        <begin position="107"/>
        <end position="120"/>
    </location>
</feature>
<feature type="disulfide bond" evidence="1">
    <location>
        <begin position="127"/>
        <end position="138"/>
    </location>
</feature>
<feature type="disulfide bond" evidence="1">
    <location>
        <begin position="134"/>
        <end position="147"/>
    </location>
</feature>
<feature type="disulfide bond" evidence="1">
    <location>
        <begin position="149"/>
        <end position="162"/>
    </location>
</feature>
<feature type="disulfide bond" evidence="1">
    <location>
        <begin position="168"/>
        <end position="179"/>
    </location>
</feature>
<feature type="disulfide bond" evidence="1">
    <location>
        <begin position="175"/>
        <end position="188"/>
    </location>
</feature>
<feature type="disulfide bond" evidence="1">
    <location>
        <begin position="190"/>
        <end position="203"/>
    </location>
</feature>
<feature type="disulfide bond" evidence="1">
    <location>
        <begin position="209"/>
        <end position="220"/>
    </location>
</feature>
<feature type="disulfide bond" evidence="1">
    <location>
        <begin position="216"/>
        <end position="230"/>
    </location>
</feature>
<feature type="disulfide bond" evidence="1">
    <location>
        <begin position="232"/>
        <end position="245"/>
    </location>
</feature>
<feature type="disulfide bond" evidence="1">
    <location>
        <begin position="251"/>
        <end position="262"/>
    </location>
</feature>
<feature type="disulfide bond" evidence="1">
    <location>
        <begin position="258"/>
        <end position="271"/>
    </location>
</feature>
<feature type="disulfide bond" evidence="1">
    <location>
        <begin position="273"/>
        <end position="286"/>
    </location>
</feature>
<feature type="disulfide bond" evidence="1">
    <location>
        <begin position="292"/>
        <end position="303"/>
    </location>
</feature>
<feature type="disulfide bond" evidence="1">
    <location>
        <begin position="299"/>
        <end position="312"/>
    </location>
</feature>
<feature type="disulfide bond" evidence="1">
    <location>
        <begin position="314"/>
        <end position="327"/>
    </location>
</feature>
<feature type="disulfide bond" evidence="1">
    <location>
        <begin position="338"/>
        <end position="349"/>
    </location>
</feature>
<feature type="disulfide bond" evidence="1">
    <location>
        <begin position="345"/>
        <end position="358"/>
    </location>
</feature>
<feature type="disulfide bond" evidence="1">
    <location>
        <begin position="360"/>
        <end position="373"/>
    </location>
</feature>
<feature type="disulfide bond" evidence="1">
    <location>
        <begin position="379"/>
        <end position="389"/>
    </location>
</feature>
<feature type="disulfide bond" evidence="1">
    <location>
        <begin position="385"/>
        <end position="398"/>
    </location>
</feature>
<feature type="disulfide bond" evidence="1">
    <location>
        <begin position="400"/>
        <end position="411"/>
    </location>
</feature>
<feature type="disulfide bond" evidence="1">
    <location>
        <begin position="419"/>
        <end position="430"/>
    </location>
</feature>
<feature type="disulfide bond" evidence="1">
    <location>
        <begin position="426"/>
        <end position="439"/>
    </location>
</feature>
<feature type="disulfide bond" evidence="1">
    <location>
        <begin position="441"/>
        <end position="454"/>
    </location>
</feature>
<feature type="disulfide bond" evidence="1">
    <location>
        <begin position="524"/>
        <end position="537"/>
    </location>
</feature>
<feature type="disulfide bond" evidence="1">
    <location>
        <begin position="531"/>
        <end position="544"/>
    </location>
</feature>
<feature type="disulfide bond" evidence="1">
    <location>
        <begin position="546"/>
        <end position="555"/>
    </location>
</feature>
<feature type="disulfide bond" evidence="1">
    <location>
        <begin position="568"/>
        <end position="580"/>
    </location>
</feature>
<feature type="disulfide bond" evidence="1">
    <location>
        <begin position="574"/>
        <end position="587"/>
    </location>
</feature>
<feature type="disulfide bond" evidence="1">
    <location>
        <begin position="589"/>
        <end position="598"/>
    </location>
</feature>
<feature type="disulfide bond" evidence="1">
    <location>
        <begin position="611"/>
        <end position="623"/>
    </location>
</feature>
<feature type="disulfide bond" evidence="1">
    <location>
        <begin position="617"/>
        <end position="630"/>
    </location>
</feature>
<feature type="disulfide bond" evidence="1">
    <location>
        <begin position="632"/>
        <end position="641"/>
    </location>
</feature>
<feature type="disulfide bond" evidence="1">
    <location>
        <begin position="654"/>
        <end position="668"/>
    </location>
</feature>
<feature type="disulfide bond" evidence="1">
    <location>
        <begin position="660"/>
        <end position="675"/>
    </location>
</feature>
<feature type="disulfide bond" evidence="1">
    <location>
        <begin position="677"/>
        <end position="686"/>
    </location>
</feature>
<feature type="disulfide bond" evidence="1">
    <location>
        <begin position="699"/>
        <end position="711"/>
    </location>
</feature>
<feature type="disulfide bond" evidence="1">
    <location>
        <begin position="705"/>
        <end position="718"/>
    </location>
</feature>
<feature type="disulfide bond" evidence="1">
    <location>
        <begin position="722"/>
        <end position="731"/>
    </location>
</feature>
<feature type="disulfide bond" evidence="1">
    <location>
        <begin position="744"/>
        <end position="755"/>
    </location>
</feature>
<feature type="disulfide bond" evidence="1">
    <location>
        <begin position="750"/>
        <end position="762"/>
    </location>
</feature>
<feature type="disulfide bond" evidence="1">
    <location>
        <begin position="764"/>
        <end position="773"/>
    </location>
</feature>
<feature type="disulfide bond" evidence="1">
    <location>
        <begin position="786"/>
        <end position="799"/>
    </location>
</feature>
<feature type="disulfide bond" evidence="1">
    <location>
        <begin position="793"/>
        <end position="806"/>
    </location>
</feature>
<feature type="disulfide bond" evidence="1">
    <location>
        <begin position="808"/>
        <end position="817"/>
    </location>
</feature>
<feature type="disulfide bond" evidence="1">
    <location>
        <begin position="830"/>
        <end position="842"/>
    </location>
</feature>
<feature type="disulfide bond" evidence="1">
    <location>
        <begin position="836"/>
        <end position="849"/>
    </location>
</feature>
<feature type="disulfide bond" evidence="1">
    <location>
        <begin position="851"/>
        <end position="860"/>
    </location>
</feature>
<feature type="disulfide bond" evidence="1">
    <location>
        <begin position="873"/>
        <end position="886"/>
    </location>
</feature>
<feature type="disulfide bond" evidence="1">
    <location>
        <begin position="879"/>
        <end position="893"/>
    </location>
</feature>
<feature type="disulfide bond" evidence="1">
    <location>
        <begin position="895"/>
        <end position="904"/>
    </location>
</feature>
<feature type="disulfide bond" evidence="1">
    <location>
        <begin position="917"/>
        <end position="929"/>
    </location>
</feature>
<feature type="disulfide bond" evidence="1">
    <location>
        <begin position="923"/>
        <end position="936"/>
    </location>
</feature>
<feature type="disulfide bond" evidence="1">
    <location>
        <begin position="938"/>
        <end position="947"/>
    </location>
</feature>
<feature type="disulfide bond" evidence="1">
    <location>
        <begin position="960"/>
        <end position="972"/>
    </location>
</feature>
<feature type="disulfide bond" evidence="1">
    <location>
        <begin position="966"/>
        <end position="979"/>
    </location>
</feature>
<feature type="disulfide bond" evidence="1">
    <location>
        <begin position="981"/>
        <end position="990"/>
    </location>
</feature>
<feature type="disulfide bond" evidence="1">
    <location>
        <begin position="1003"/>
        <end position="1015"/>
    </location>
</feature>
<feature type="disulfide bond" evidence="1">
    <location>
        <begin position="1009"/>
        <end position="1022"/>
    </location>
</feature>
<feature type="disulfide bond" evidence="1">
    <location>
        <begin position="1024"/>
        <end position="1033"/>
    </location>
</feature>
<feature type="disulfide bond" evidence="1">
    <location>
        <begin position="1046"/>
        <end position="1058"/>
    </location>
</feature>
<feature type="disulfide bond" evidence="1">
    <location>
        <begin position="1052"/>
        <end position="1065"/>
    </location>
</feature>
<feature type="disulfide bond" evidence="1">
    <location>
        <begin position="1067"/>
        <end position="1076"/>
    </location>
</feature>
<feature type="disulfide bond" evidence="1">
    <location>
        <begin position="1089"/>
        <end position="1101"/>
    </location>
</feature>
<feature type="disulfide bond" evidence="1">
    <location>
        <begin position="1095"/>
        <end position="1108"/>
    </location>
</feature>
<feature type="disulfide bond" evidence="1">
    <location>
        <begin position="1110"/>
        <end position="1119"/>
    </location>
</feature>
<feature type="disulfide bond" evidence="1">
    <location>
        <begin position="1132"/>
        <end position="1144"/>
    </location>
</feature>
<feature type="disulfide bond" evidence="1">
    <location>
        <begin position="1138"/>
        <end position="1151"/>
    </location>
</feature>
<feature type="disulfide bond" evidence="1">
    <location>
        <begin position="1153"/>
        <end position="1162"/>
    </location>
</feature>
<feature type="disulfide bond" evidence="1">
    <location>
        <begin position="1175"/>
        <end position="1187"/>
    </location>
</feature>
<feature type="disulfide bond" evidence="1">
    <location>
        <begin position="1181"/>
        <end position="1194"/>
    </location>
</feature>
<feature type="disulfide bond" evidence="1">
    <location>
        <begin position="1196"/>
        <end position="1205"/>
    </location>
</feature>
<feature type="disulfide bond" evidence="1">
    <location>
        <begin position="1218"/>
        <end position="1231"/>
    </location>
</feature>
<feature type="disulfide bond" evidence="1">
    <location>
        <begin position="1224"/>
        <end position="1238"/>
    </location>
</feature>
<feature type="disulfide bond" evidence="1">
    <location>
        <begin position="1240"/>
        <end position="1249"/>
    </location>
</feature>
<feature type="disulfide bond" evidence="1">
    <location>
        <begin position="1262"/>
        <end position="1274"/>
    </location>
</feature>
<feature type="disulfide bond" evidence="1">
    <location>
        <begin position="1268"/>
        <end position="1281"/>
    </location>
</feature>
<feature type="disulfide bond" evidence="1">
    <location>
        <begin position="1283"/>
        <end position="1292"/>
    </location>
</feature>
<feature type="disulfide bond" evidence="1">
    <location>
        <begin position="1305"/>
        <end position="1317"/>
    </location>
</feature>
<feature type="disulfide bond" evidence="1">
    <location>
        <begin position="1311"/>
        <end position="1324"/>
    </location>
</feature>
<feature type="disulfide bond" evidence="1">
    <location>
        <begin position="1326"/>
        <end position="1335"/>
    </location>
</feature>
<feature type="disulfide bond" evidence="1">
    <location>
        <begin position="1348"/>
        <end position="1360"/>
    </location>
</feature>
<feature type="disulfide bond" evidence="1">
    <location>
        <begin position="1354"/>
        <end position="1367"/>
    </location>
</feature>
<feature type="disulfide bond" evidence="1">
    <location>
        <begin position="1369"/>
        <end position="1378"/>
    </location>
</feature>
<feature type="disulfide bond" evidence="1">
    <location>
        <begin position="1391"/>
        <end position="1403"/>
    </location>
</feature>
<feature type="disulfide bond" evidence="1">
    <location>
        <begin position="1397"/>
        <end position="1410"/>
    </location>
</feature>
<feature type="disulfide bond" evidence="1">
    <location>
        <begin position="1412"/>
        <end position="1421"/>
    </location>
</feature>
<feature type="disulfide bond" evidence="1">
    <location>
        <begin position="1434"/>
        <end position="1446"/>
    </location>
</feature>
<feature type="disulfide bond" evidence="1">
    <location>
        <begin position="1440"/>
        <end position="1453"/>
    </location>
</feature>
<feature type="disulfide bond" evidence="1">
    <location>
        <begin position="1455"/>
        <end position="1464"/>
    </location>
</feature>
<feature type="disulfide bond" evidence="1">
    <location>
        <begin position="1477"/>
        <end position="1489"/>
    </location>
</feature>
<feature type="disulfide bond" evidence="1">
    <location>
        <begin position="1483"/>
        <end position="1496"/>
    </location>
</feature>
<feature type="disulfide bond" evidence="1">
    <location>
        <begin position="1498"/>
        <end position="1507"/>
    </location>
</feature>
<feature type="disulfide bond" evidence="1">
    <location>
        <begin position="1520"/>
        <end position="1532"/>
    </location>
</feature>
<feature type="disulfide bond" evidence="1">
    <location>
        <begin position="1526"/>
        <end position="1539"/>
    </location>
</feature>
<feature type="disulfide bond" evidence="1">
    <location>
        <begin position="1541"/>
        <end position="1550"/>
    </location>
</feature>
<sequence>MPVRAEARAAWRVVALALLLLPAMPAASPPLTPRPLQPSMPHVCAEQKLTLVGHRQPCVQAFSRIVPVWRRTGCAQQAWCIGQERRTVYYMSYRQVYATEARTVFRCCPGWSQKPGQEGCLSDVDECASANGGCEGPCCNTVGGFYCRCPPGYQLQGDGKTCQDVDECRAHNGGCQHRCVNTPGSYLCECKPGFRLHTDGRTCLAISSCTLGNGGCQHQCVQLTVTQHRCQCRPQYQLQEDGRRCVRRSPCAEGNGGCMHICQELRGLAHCGCHPGYQLAADRKTCEDVDECALGLAQCAHGCLNTQGSFKCVCHAGYELGADGRQCYRIEMEIVNSCEAGNGGCSHGCSHTSTGPLCTCPRGYELDEDQKTCIDIDDCANSPCCQQACANTPGGYECSCFAGYRLNTDGCGCEDVDECASGHGGCEHHCSNLAGSFQCFCEAGYRLDEDRRGCTSLEESVVDLDGRLPFVRPLPHIAVLRDELPRLFQDDYGAEEEAAAAELRGEHTLTEKFVCLDHSFGHDCSLTCDDCRNGGTCFPGQDGCDCPEGWTGIICNETCPPDTFGKNCSSPCTCQNGGTCDPVLGACRCPPGVSGAHCEDGCPKGFYGKHCRKKCHCANRGRCHRLYGACLCDPGLYGRFCHLACPPWAFGPGCSEDCLCEQSHTRSCNPKDGSCSCKAGFQGERCQAECESGFFGPGCRHRCTCQPGVACDPVSGECRTQCPPGYQGEDCGQECPVGTFGVNCSGSCSCVGAPCHRVTGECLCPPGKTGEDCGADCPEGRWGLGCQEICPACEHGASCNPETGTCLCLPGFVGSRCQDTCSAGWYGTGCQIRCACANDGHCDPTTGRCSCAPGWTGLSCQRACDSGHWGPDCIHPCNCSAGHGNCDAVSGLCLCEAGYEGPRCEQSCRQGYYGPSCEQKCRCEHGAACDHVSGACTCPAGWRGSFCEHACPAGFFGLDCDSACNCSAGAPCDAVTGSCICPAGRWGPRCAQSCPPLTFGLNCSQICTCFNGASCDSVTGQCHCAPGWMGPTCLQACPPGLYGKNCQHSCLCRNGGRCDPILGQCTCPEGWTGLACENECLPGHYAAGCQLNCSCLHGGICDRLTGHCLCPAGWTGDKCQSSCVSGTFGVHCEEHCACRKGASCHHVTGACFCPPGWRGPHCEQACPRGWFGEACAQRCLCPTNASCHHVTGECRCPPGFTGLSCEQACQPGTFGKDCEHLCQCPGETWACDPASGVCTCAAGYHGTGCLQRCPSGRYGPGCEHICKCLNGGTCDPATGACYCPAGFLGADCSLACPQGRFGPSCAHVCACRQGAACDPVSGACICSPGKTGVRCEHGCPQDRFGKGCELKCACRNGGLCHATNGSCSCPLGWMGPHCEHACPAGRYGAACLLECFCQNNGSCEPTTGACLCGPGFYGQACEHSCPSGFHGPGCQRVCECQQGAPCDPVSGQCLCPAGFHGQFCEKGCESGSFGDGCLQQCNCHTGVPCDPISGLCLCPPGRTGAACDLDCRRGRFGPGCALRCDCGGGADCDPISGQCHCVDSYMGPTCREVPTQISSSRPAPQHPSSRAMKH</sequence>
<organism>
    <name type="scientific">Rattus norvegicus</name>
    <name type="common">Rat</name>
    <dbReference type="NCBI Taxonomy" id="10116"/>
    <lineage>
        <taxon>Eukaryota</taxon>
        <taxon>Metazoa</taxon>
        <taxon>Chordata</taxon>
        <taxon>Craniata</taxon>
        <taxon>Vertebrata</taxon>
        <taxon>Euteleostomi</taxon>
        <taxon>Mammalia</taxon>
        <taxon>Eutheria</taxon>
        <taxon>Euarchontoglires</taxon>
        <taxon>Glires</taxon>
        <taxon>Rodentia</taxon>
        <taxon>Myomorpha</taxon>
        <taxon>Muroidea</taxon>
        <taxon>Muridae</taxon>
        <taxon>Murinae</taxon>
        <taxon>Rattus</taxon>
    </lineage>
</organism>
<comment type="subcellular location">
    <subcellularLocation>
        <location evidence="7">Secreted</location>
    </subcellularLocation>
</comment>
<comment type="tissue specificity">
    <text evidence="6">Expressed in lung.</text>
</comment>
<evidence type="ECO:0000250" key="1"/>
<evidence type="ECO:0000255" key="2"/>
<evidence type="ECO:0000255" key="3">
    <source>
        <dbReference type="PROSITE-ProRule" id="PRU00076"/>
    </source>
</evidence>
<evidence type="ECO:0000255" key="4">
    <source>
        <dbReference type="PROSITE-ProRule" id="PRU00384"/>
    </source>
</evidence>
<evidence type="ECO:0000256" key="5">
    <source>
        <dbReference type="SAM" id="MobiDB-lite"/>
    </source>
</evidence>
<evidence type="ECO:0000269" key="6">
    <source>
    </source>
</evidence>
<evidence type="ECO:0000305" key="7"/>
<gene>
    <name type="primary">Megf6</name>
    <name type="synonym">Egfl3</name>
</gene>
<accession>O88281</accession>